<name>RDC4_METCM</name>
<organism>
    <name type="scientific">Metacordyceps chlamydosporia</name>
    <name type="common">Nematophagous fungus</name>
    <name type="synonym">Pochonia chlamydosporia</name>
    <dbReference type="NCBI Taxonomy" id="280754"/>
    <lineage>
        <taxon>Eukaryota</taxon>
        <taxon>Fungi</taxon>
        <taxon>Dikarya</taxon>
        <taxon>Ascomycota</taxon>
        <taxon>Pezizomycotina</taxon>
        <taxon>Sordariomycetes</taxon>
        <taxon>Hypocreomycetidae</taxon>
        <taxon>Hypocreales</taxon>
        <taxon>Clavicipitaceae</taxon>
        <taxon>Pochonia</taxon>
    </lineage>
</organism>
<proteinExistence type="evidence at protein level"/>
<protein>
    <recommendedName>
        <fullName evidence="3">Cytochrome P450 monooxygenase rdc4</fullName>
        <ecNumber evidence="5">1.-.-.-</ecNumber>
    </recommendedName>
    <alternativeName>
        <fullName evidence="3">Hypothemycin biosynthesis cluster protein rdc4</fullName>
    </alternativeName>
</protein>
<reference key="1">
    <citation type="journal article" date="2008" name="Appl. Environ. Microbiol.">
        <title>Genes for the biosynthesis of the fungal polyketides hypothemycin from Hypomyces subiculosus and radicicol from Pochonia chlamydosporia.</title>
        <authorList>
            <person name="Reeves C.D."/>
            <person name="Hu Z."/>
            <person name="Reid R."/>
            <person name="Kealey J.T."/>
        </authorList>
    </citation>
    <scope>NUCLEOTIDE SEQUENCE [GENOMIC DNA]</scope>
    <scope>FUNCTION</scope>
    <source>
        <strain>ATCC 16683 / CBS 504.66</strain>
    </source>
</reference>
<reference key="2">
    <citation type="journal article" date="2009" name="Curr. Top. Med. Chem.">
        <title>Hsp90 inhibition with resorcyclic acid lactones (RALs).</title>
        <authorList>
            <person name="Winssinger N."/>
            <person name="Fontaine J.G."/>
            <person name="Barluenga S."/>
        </authorList>
    </citation>
    <scope>REVIEW ON BIOTECHNOLOGY</scope>
</reference>
<sequence>MNVSPQLLGYVVYTAIYNVYFHPLANFPGPKYLAASRIPLAFKRLTGEEVAMTYKLHIKYGPYVRVSPDELSTISTAATKDVYGHNTRAGGVPKDFKAYYMKNQRKDGTEGLLTAGDEEHYRQRKVFAPAFSDRAIREQEPLLKKYTDLLVAKSYEKCQTAGKVDMVMFFNFATFDFIADCVFGDSLHHLESMEYHPFLANITATVRFSAMRRVLRSFPILQAIFEAFMPKSMIKKRLEHVKFCDERVMNRLANDNPSHPDFWTLVEHAEAKGNGLTKGEMRQNGFLLLTAATETTSSLMSAITYLLCKNPEKMKKLQAEVRGAFKSTDEMNTITLPKLQYLQMAIEEGLRVYPPVPGGLPRRVVQPGTTLDGSASNMHIQSVVFYSQYASYHSPSHFARPHEFIPERWSQNPPAEFANDRLEAVQAFSAGPRDCIGKNLAYHEARMLLAKFVFTYDIELCKESSDWIKQKVYIVGAKSPLWVKLVKHERAD</sequence>
<evidence type="ECO:0000250" key="1">
    <source>
        <dbReference type="UniProtKB" id="P04798"/>
    </source>
</evidence>
<evidence type="ECO:0000269" key="2">
    <source>
    </source>
</evidence>
<evidence type="ECO:0000303" key="3">
    <source>
    </source>
</evidence>
<evidence type="ECO:0000305" key="4"/>
<evidence type="ECO:0000305" key="5">
    <source>
    </source>
</evidence>
<feature type="chain" id="PRO_0000437594" description="Cytochrome P450 monooxygenase rdc4">
    <location>
        <begin position="1"/>
        <end position="492"/>
    </location>
</feature>
<feature type="binding site" description="axial binding residue" evidence="1">
    <location>
        <position position="435"/>
    </location>
    <ligand>
        <name>heme</name>
        <dbReference type="ChEBI" id="CHEBI:30413"/>
    </ligand>
    <ligandPart>
        <name>Fe</name>
        <dbReference type="ChEBI" id="CHEBI:18248"/>
    </ligandPart>
</feature>
<accession>B3FWT9</accession>
<comment type="function">
    <text evidence="2 5">Cytochrome P450 monooxygenase; part of the gene cluster that mediates the biosynthesis of radicicol, a resorcylic acid lactone (RAL) that irreversibly inhibits the HSP90 molecular chaperone, an important target for cancer chemotherapy (PubMed:18567690). The radicicol cluster encodes only two apparent post-PKS enzymes, a cytochrome P450 monooxygenase (rdc4) and a non-heme halogenase (rdc2) that could introduce the epoxide and the chlorine, respectively. If this cluster includes all the genes required for radicicol biosynthesis, the remaining structural features of radicicol are presumably generated by the PKSs rdc1 and rdc5. The C-2' ketone could arise if the R-PKS rdc5 and NR-PKS rdc1 each carry out four iterations, in contrast to the five iteration-three iteration split for the hypothemycin PKSs. The origin of the cis 5',6' double bond is not known. The radicicol R-PKS rdc5 ER domain may catalyze either double bond isomerization or reduction in the third iteration (Probable) (PubMed:18567690).</text>
</comment>
<comment type="cofactor">
    <cofactor evidence="1">
        <name>heme</name>
        <dbReference type="ChEBI" id="CHEBI:30413"/>
    </cofactor>
</comment>
<comment type="pathway">
    <text evidence="2">Secondary metabolite biosynthesis.</text>
</comment>
<comment type="biotechnology">
    <text>Radicicol is an important pharmacophore as an inhibitor of heat shock protein 90 (Hsp90), an ATP-dependent chaperone involved in the post-translational maturation and stabilization of over one hundred proteins, and which activity has been implicated in diverse pathologies ranging from oncology to neurodegenerative and infectious diseases (PubMed:19860733).</text>
</comment>
<comment type="similarity">
    <text evidence="4">Belongs to the cytochrome P450 family.</text>
</comment>
<gene>
    <name evidence="3" type="primary">rdc4</name>
</gene>
<keyword id="KW-0349">Heme</keyword>
<keyword id="KW-0408">Iron</keyword>
<keyword id="KW-0479">Metal-binding</keyword>
<keyword id="KW-0503">Monooxygenase</keyword>
<keyword id="KW-0560">Oxidoreductase</keyword>
<dbReference type="EC" id="1.-.-.-" evidence="5"/>
<dbReference type="EMBL" id="EU520419">
    <property type="protein sequence ID" value="ACD39773.1"/>
    <property type="molecule type" value="Genomic_DNA"/>
</dbReference>
<dbReference type="SMR" id="B3FWT9"/>
<dbReference type="GO" id="GO:0020037">
    <property type="term" value="F:heme binding"/>
    <property type="evidence" value="ECO:0007669"/>
    <property type="project" value="InterPro"/>
</dbReference>
<dbReference type="GO" id="GO:0005506">
    <property type="term" value="F:iron ion binding"/>
    <property type="evidence" value="ECO:0007669"/>
    <property type="project" value="InterPro"/>
</dbReference>
<dbReference type="GO" id="GO:0004497">
    <property type="term" value="F:monooxygenase activity"/>
    <property type="evidence" value="ECO:0007669"/>
    <property type="project" value="UniProtKB-KW"/>
</dbReference>
<dbReference type="GO" id="GO:0016705">
    <property type="term" value="F:oxidoreductase activity, acting on paired donors, with incorporation or reduction of molecular oxygen"/>
    <property type="evidence" value="ECO:0007669"/>
    <property type="project" value="InterPro"/>
</dbReference>
<dbReference type="GO" id="GO:0009058">
    <property type="term" value="P:biosynthetic process"/>
    <property type="evidence" value="ECO:0007669"/>
    <property type="project" value="UniProtKB-ARBA"/>
</dbReference>
<dbReference type="CDD" id="cd11058">
    <property type="entry name" value="CYP60B-like"/>
    <property type="match status" value="1"/>
</dbReference>
<dbReference type="Gene3D" id="1.10.630.10">
    <property type="entry name" value="Cytochrome P450"/>
    <property type="match status" value="1"/>
</dbReference>
<dbReference type="InterPro" id="IPR001128">
    <property type="entry name" value="Cyt_P450"/>
</dbReference>
<dbReference type="InterPro" id="IPR017972">
    <property type="entry name" value="Cyt_P450_CS"/>
</dbReference>
<dbReference type="InterPro" id="IPR002401">
    <property type="entry name" value="Cyt_P450_E_grp-I"/>
</dbReference>
<dbReference type="InterPro" id="IPR036396">
    <property type="entry name" value="Cyt_P450_sf"/>
</dbReference>
<dbReference type="InterPro" id="IPR050121">
    <property type="entry name" value="Cytochrome_P450_monoxygenase"/>
</dbReference>
<dbReference type="PANTHER" id="PTHR24305">
    <property type="entry name" value="CYTOCHROME P450"/>
    <property type="match status" value="1"/>
</dbReference>
<dbReference type="PANTHER" id="PTHR24305:SF210">
    <property type="entry name" value="CYTOCHROME P450 MONOOXYGENASE ASQL-RELATED"/>
    <property type="match status" value="1"/>
</dbReference>
<dbReference type="Pfam" id="PF00067">
    <property type="entry name" value="p450"/>
    <property type="match status" value="1"/>
</dbReference>
<dbReference type="PRINTS" id="PR00463">
    <property type="entry name" value="EP450I"/>
</dbReference>
<dbReference type="PRINTS" id="PR00385">
    <property type="entry name" value="P450"/>
</dbReference>
<dbReference type="SUPFAM" id="SSF48264">
    <property type="entry name" value="Cytochrome P450"/>
    <property type="match status" value="1"/>
</dbReference>
<dbReference type="PROSITE" id="PS00086">
    <property type="entry name" value="CYTOCHROME_P450"/>
    <property type="match status" value="1"/>
</dbReference>